<name>ALOX1_KOMPG</name>
<feature type="initiator methionine" description="Removed" evidence="3">
    <location>
        <position position="1"/>
    </location>
</feature>
<feature type="chain" id="PRO_0000205582" description="Alcohol oxidase 1">
    <location>
        <begin position="2"/>
        <end position="663"/>
    </location>
</feature>
<feature type="short sequence motif" description="Microbody targeting signal">
    <location>
        <begin position="661"/>
        <end position="663"/>
    </location>
</feature>
<feature type="active site" description="Proton acceptor" evidence="2">
    <location>
        <position position="567"/>
    </location>
</feature>
<feature type="binding site" evidence="1">
    <location>
        <begin position="8"/>
        <end position="38"/>
    </location>
    <ligand>
        <name>FAD</name>
        <dbReference type="ChEBI" id="CHEBI:57692"/>
    </ligand>
</feature>
<feature type="strand" evidence="6">
    <location>
        <begin position="5"/>
        <end position="12"/>
    </location>
</feature>
<feature type="helix" evidence="6">
    <location>
        <begin position="16"/>
        <end position="29"/>
    </location>
</feature>
<feature type="strand" evidence="6">
    <location>
        <begin position="30"/>
        <end position="32"/>
    </location>
</feature>
<feature type="strand" evidence="6">
    <location>
        <begin position="34"/>
        <end position="37"/>
    </location>
</feature>
<feature type="helix" evidence="6">
    <location>
        <begin position="47"/>
        <end position="50"/>
    </location>
</feature>
<feature type="helix" evidence="6">
    <location>
        <begin position="52"/>
        <end position="54"/>
    </location>
</feature>
<feature type="helix" evidence="6">
    <location>
        <begin position="56"/>
        <end position="59"/>
    </location>
</feature>
<feature type="helix" evidence="6">
    <location>
        <begin position="75"/>
        <end position="77"/>
    </location>
</feature>
<feature type="helix" evidence="6">
    <location>
        <begin position="92"/>
        <end position="95"/>
    </location>
</feature>
<feature type="helix" evidence="6">
    <location>
        <begin position="106"/>
        <end position="111"/>
    </location>
</feature>
<feature type="helix" evidence="6">
    <location>
        <begin position="119"/>
        <end position="127"/>
    </location>
</feature>
<feature type="strand" evidence="6">
    <location>
        <begin position="129"/>
        <end position="132"/>
    </location>
</feature>
<feature type="turn" evidence="6">
    <location>
        <begin position="139"/>
        <end position="141"/>
    </location>
</feature>
<feature type="strand" evidence="6">
    <location>
        <begin position="147"/>
        <end position="151"/>
    </location>
</feature>
<feature type="helix" evidence="6">
    <location>
        <begin position="159"/>
        <end position="168"/>
    </location>
</feature>
<feature type="turn" evidence="6">
    <location>
        <begin position="169"/>
        <end position="171"/>
    </location>
</feature>
<feature type="strand" evidence="6">
    <location>
        <begin position="180"/>
        <end position="182"/>
    </location>
</feature>
<feature type="strand" evidence="6">
    <location>
        <begin position="192"/>
        <end position="194"/>
    </location>
</feature>
<feature type="turn" evidence="6">
    <location>
        <begin position="196"/>
        <end position="198"/>
    </location>
</feature>
<feature type="helix" evidence="6">
    <location>
        <begin position="204"/>
        <end position="208"/>
    </location>
</feature>
<feature type="helix" evidence="6">
    <location>
        <begin position="210"/>
        <end position="215"/>
    </location>
</feature>
<feature type="strand" evidence="6">
    <location>
        <begin position="217"/>
        <end position="222"/>
    </location>
</feature>
<feature type="strand" evidence="6">
    <location>
        <begin position="224"/>
        <end position="227"/>
    </location>
</feature>
<feature type="strand" evidence="6">
    <location>
        <begin position="239"/>
        <end position="246"/>
    </location>
</feature>
<feature type="strand" evidence="6">
    <location>
        <begin position="256"/>
        <end position="266"/>
    </location>
</feature>
<feature type="helix" evidence="6">
    <location>
        <begin position="269"/>
        <end position="279"/>
    </location>
</feature>
<feature type="helix" evidence="6">
    <location>
        <begin position="285"/>
        <end position="289"/>
    </location>
</feature>
<feature type="turn" evidence="6">
    <location>
        <begin position="290"/>
        <end position="292"/>
    </location>
</feature>
<feature type="turn" evidence="6">
    <location>
        <begin position="300"/>
        <end position="303"/>
    </location>
</feature>
<feature type="strand" evidence="6">
    <location>
        <begin position="304"/>
        <end position="307"/>
    </location>
</feature>
<feature type="strand" evidence="6">
    <location>
        <begin position="310"/>
        <end position="318"/>
    </location>
</feature>
<feature type="helix" evidence="6">
    <location>
        <begin position="325"/>
        <end position="327"/>
    </location>
</feature>
<feature type="turn" evidence="6">
    <location>
        <begin position="328"/>
        <end position="331"/>
    </location>
</feature>
<feature type="helix" evidence="6">
    <location>
        <begin position="335"/>
        <end position="345"/>
    </location>
</feature>
<feature type="helix" evidence="6">
    <location>
        <begin position="350"/>
        <end position="352"/>
    </location>
</feature>
<feature type="strand" evidence="6">
    <location>
        <begin position="355"/>
        <end position="362"/>
    </location>
</feature>
<feature type="helix" evidence="6">
    <location>
        <begin position="366"/>
        <end position="369"/>
    </location>
</feature>
<feature type="helix" evidence="6">
    <location>
        <begin position="374"/>
        <end position="383"/>
    </location>
</feature>
<feature type="strand" evidence="6">
    <location>
        <begin position="392"/>
        <end position="400"/>
    </location>
</feature>
<feature type="helix" evidence="6">
    <location>
        <begin position="405"/>
        <end position="407"/>
    </location>
</feature>
<feature type="strand" evidence="6">
    <location>
        <begin position="413"/>
        <end position="422"/>
    </location>
</feature>
<feature type="strand" evidence="6">
    <location>
        <begin position="427"/>
        <end position="430"/>
    </location>
</feature>
<feature type="strand" evidence="6">
    <location>
        <begin position="433"/>
        <end position="435"/>
    </location>
</feature>
<feature type="strand" evidence="6">
    <location>
        <begin position="441"/>
        <end position="443"/>
    </location>
</feature>
<feature type="helix" evidence="6">
    <location>
        <begin position="450"/>
        <end position="452"/>
    </location>
</feature>
<feature type="helix" evidence="6">
    <location>
        <begin position="454"/>
        <end position="467"/>
    </location>
</feature>
<feature type="strand" evidence="6">
    <location>
        <begin position="468"/>
        <end position="470"/>
    </location>
</feature>
<feature type="strand" evidence="6">
    <location>
        <begin position="473"/>
        <end position="476"/>
    </location>
</feature>
<feature type="helix" evidence="6">
    <location>
        <begin position="478"/>
        <end position="480"/>
    </location>
</feature>
<feature type="helix" evidence="6">
    <location>
        <begin position="497"/>
        <end position="504"/>
    </location>
</feature>
<feature type="turn" evidence="6">
    <location>
        <begin position="534"/>
        <end position="536"/>
    </location>
</feature>
<feature type="helix" evidence="6">
    <location>
        <begin position="548"/>
        <end position="561"/>
    </location>
</feature>
<feature type="strand" evidence="6">
    <location>
        <begin position="581"/>
        <end position="583"/>
    </location>
</feature>
<feature type="strand" evidence="6">
    <location>
        <begin position="593"/>
        <end position="595"/>
    </location>
</feature>
<feature type="strand" evidence="6">
    <location>
        <begin position="599"/>
        <end position="603"/>
    </location>
</feature>
<feature type="helix" evidence="6">
    <location>
        <begin position="606"/>
        <end position="608"/>
    </location>
</feature>
<feature type="helix" evidence="6">
    <location>
        <begin position="618"/>
        <end position="635"/>
    </location>
</feature>
<feature type="turn" evidence="6">
    <location>
        <begin position="655"/>
        <end position="657"/>
    </location>
</feature>
<comment type="function">
    <text evidence="4">Major isoform of alcohol oxidase, which catalyzes the oxidation of methanol to formaldehyde and hydrogen peroxide, the first step in the methanol utilization pathway of methylotrophic yeasts.</text>
</comment>
<comment type="catalytic activity">
    <reaction>
        <text>a primary alcohol + O2 = an aldehyde + H2O2</text>
        <dbReference type="Rhea" id="RHEA:19829"/>
        <dbReference type="ChEBI" id="CHEBI:15379"/>
        <dbReference type="ChEBI" id="CHEBI:15734"/>
        <dbReference type="ChEBI" id="CHEBI:16240"/>
        <dbReference type="ChEBI" id="CHEBI:17478"/>
        <dbReference type="EC" id="1.1.3.13"/>
    </reaction>
</comment>
<comment type="cofactor">
    <cofactor>
        <name>FAD</name>
        <dbReference type="ChEBI" id="CHEBI:57692"/>
    </cofactor>
</comment>
<comment type="pathway">
    <text>Energy metabolism; methane degradation.</text>
</comment>
<comment type="subunit">
    <text evidence="4">Homooctamer. Assembles only after import into the peroxisomal matrix, fails to assemble in the cytoplasm.</text>
</comment>
<comment type="subcellular location">
    <subcellularLocation>
        <location evidence="4">Peroxisome matrix</location>
    </subcellularLocation>
</comment>
<comment type="induction">
    <text evidence="3">Induced by methanol. Subject to strong carbon catabolite repression.</text>
</comment>
<comment type="domain">
    <text evidence="4">The C-terminal peroxisomal targeting signal (PTS) is essential for the efficient targeting and import of AOX into peroxisomes via the PTS1 pathway.</text>
</comment>
<comment type="similarity">
    <text evidence="5">Belongs to the GMC oxidoreductase family.</text>
</comment>
<sequence length="663" mass="73898">MAIPEEFDILVLGGGSSGSCIAGRLANLDHSLKVGLIEAGENNLNNPWVYLPGIYPRNMKLDSKTASFYTSNPSPHLNGRRAIVPCANVLGGGSSINFMMYTRGSASDYDDFQAEGWKTKDLLPLMKKTETYQRACNNPDIHGFEGPIKVSFGNYTYPVCQDFLRASESQGIPYVDDLEDLVTAHGAEHWLKWINRDTGRRSDSAHAFVHSTMRNHDNLYLICNTKVDKIIVEDGRAAAVRTVPSKPLNPKKPSHKIYRARKQIVLSCGTISSPLVLQRSGFGDPIKLRAAGVKPLVNLPGVGRNFQDHYCFFSPYRIKPQYESFDDFVRGDAEIQKRVFDQWYANGTGPLATNGIEAGVKIRPTPEELSQMDESFQEGYREYFEDKPDKPVMHYSIIAGFFGDHTKIPPGKYMTMFHFLEYPFSRGSIHITSPDPYAAPDFDPGFMNDERDMAPMVWAYKKSRETARRMDHFAGEVTSHHPLFPYSSEARALEMDLETSNAYGGPLNLSAGLAHGSWTQPLKKPTAKNEGHVTSNQVELHPDIEYDEEDDKAIENYIREHTETTWHCLGTCSIGPREGSKIVKWGGVLDHRSNVYGVKGLKVGDLSVCPDNVGCNTYTTALLIGEKTATLVGEDLGYSGEALDMTVPQFKLGTYEKTGLARF</sequence>
<dbReference type="EC" id="1.1.3.13"/>
<dbReference type="EMBL" id="X02646">
    <property type="protein sequence ID" value="CAA26484.1"/>
    <property type="molecule type" value="Genomic_DNA"/>
</dbReference>
<dbReference type="EMBL" id="FN392322">
    <property type="protein sequence ID" value="CAY72092.1"/>
    <property type="molecule type" value="Genomic_DNA"/>
</dbReference>
<dbReference type="PIR" id="A23483">
    <property type="entry name" value="A23483"/>
</dbReference>
<dbReference type="RefSeq" id="XP_002494271.1">
    <property type="nucleotide sequence ID" value="XM_002494226.1"/>
</dbReference>
<dbReference type="PDB" id="5I68">
    <property type="method" value="EM"/>
    <property type="resolution" value="3.37 A"/>
    <property type="chains" value="A=1-663"/>
</dbReference>
<dbReference type="PDBsum" id="5I68"/>
<dbReference type="SMR" id="P04842"/>
<dbReference type="STRING" id="644223.P04842"/>
<dbReference type="CAZy" id="AA3">
    <property type="family name" value="Auxiliary Activities 3"/>
</dbReference>
<dbReference type="EnsemblFungi" id="CAY72092">
    <property type="protein sequence ID" value="CAY72092"/>
    <property type="gene ID" value="PAS_chr4_0821"/>
</dbReference>
<dbReference type="GeneID" id="8201223"/>
<dbReference type="KEGG" id="ppa:PAS_chr4_0821"/>
<dbReference type="eggNOG" id="KOG1238">
    <property type="taxonomic scope" value="Eukaryota"/>
</dbReference>
<dbReference type="HOGENOM" id="CLU_002865_5_1_1"/>
<dbReference type="InParanoid" id="P04842"/>
<dbReference type="OMA" id="SWPTPHF"/>
<dbReference type="OrthoDB" id="269227at2759"/>
<dbReference type="BRENDA" id="1.1.3.13">
    <property type="organism ID" value="4827"/>
</dbReference>
<dbReference type="UniPathway" id="UPA00147"/>
<dbReference type="Proteomes" id="UP000000314">
    <property type="component" value="Chromosome 4"/>
</dbReference>
<dbReference type="GO" id="GO:0005782">
    <property type="term" value="C:peroxisomal matrix"/>
    <property type="evidence" value="ECO:0007669"/>
    <property type="project" value="UniProtKB-SubCell"/>
</dbReference>
<dbReference type="GO" id="GO:0047639">
    <property type="term" value="F:alcohol oxidase activity"/>
    <property type="evidence" value="ECO:0007669"/>
    <property type="project" value="UniProtKB-EC"/>
</dbReference>
<dbReference type="GO" id="GO:0050660">
    <property type="term" value="F:flavin adenine dinucleotide binding"/>
    <property type="evidence" value="ECO:0007669"/>
    <property type="project" value="InterPro"/>
</dbReference>
<dbReference type="GO" id="GO:0046188">
    <property type="term" value="P:methane catabolic process"/>
    <property type="evidence" value="ECO:0007669"/>
    <property type="project" value="UniProtKB-UniPathway"/>
</dbReference>
<dbReference type="GO" id="GO:0015945">
    <property type="term" value="P:methanol metabolic process"/>
    <property type="evidence" value="ECO:0007669"/>
    <property type="project" value="UniProtKB-KW"/>
</dbReference>
<dbReference type="Gene3D" id="3.50.50.60">
    <property type="entry name" value="FAD/NAD(P)-binding domain"/>
    <property type="match status" value="2"/>
</dbReference>
<dbReference type="Gene3D" id="3.30.560.10">
    <property type="entry name" value="Glucose Oxidase, domain 3"/>
    <property type="match status" value="2"/>
</dbReference>
<dbReference type="InterPro" id="IPR036188">
    <property type="entry name" value="FAD/NAD-bd_sf"/>
</dbReference>
<dbReference type="InterPro" id="IPR012132">
    <property type="entry name" value="GMC_OxRdtase"/>
</dbReference>
<dbReference type="InterPro" id="IPR000172">
    <property type="entry name" value="GMC_OxRdtase_N"/>
</dbReference>
<dbReference type="InterPro" id="IPR007867">
    <property type="entry name" value="GMC_OxRtase_C"/>
</dbReference>
<dbReference type="PANTHER" id="PTHR11552">
    <property type="entry name" value="GLUCOSE-METHANOL-CHOLINE GMC OXIDOREDUCTASE"/>
    <property type="match status" value="1"/>
</dbReference>
<dbReference type="PANTHER" id="PTHR11552:SF119">
    <property type="entry name" value="GLUCOSE-METHANOL-CHOLINE OXIDOREDUCTASE N-TERMINAL DOMAIN-CONTAINING PROTEIN"/>
    <property type="match status" value="1"/>
</dbReference>
<dbReference type="Pfam" id="PF05199">
    <property type="entry name" value="GMC_oxred_C"/>
    <property type="match status" value="1"/>
</dbReference>
<dbReference type="Pfam" id="PF00732">
    <property type="entry name" value="GMC_oxred_N"/>
    <property type="match status" value="1"/>
</dbReference>
<dbReference type="PIRSF" id="PIRSF000137">
    <property type="entry name" value="Alcohol_oxidase"/>
    <property type="match status" value="1"/>
</dbReference>
<dbReference type="SUPFAM" id="SSF54373">
    <property type="entry name" value="FAD-linked reductases, C-terminal domain"/>
    <property type="match status" value="1"/>
</dbReference>
<dbReference type="SUPFAM" id="SSF51905">
    <property type="entry name" value="FAD/NAD(P)-binding domain"/>
    <property type="match status" value="1"/>
</dbReference>
<dbReference type="PROSITE" id="PS00623">
    <property type="entry name" value="GMC_OXRED_1"/>
    <property type="match status" value="1"/>
</dbReference>
<organism>
    <name type="scientific">Komagataella phaffii (strain GS115 / ATCC 20864)</name>
    <name type="common">Yeast</name>
    <name type="synonym">Pichia pastoris</name>
    <dbReference type="NCBI Taxonomy" id="644223"/>
    <lineage>
        <taxon>Eukaryota</taxon>
        <taxon>Fungi</taxon>
        <taxon>Dikarya</taxon>
        <taxon>Ascomycota</taxon>
        <taxon>Saccharomycotina</taxon>
        <taxon>Pichiomycetes</taxon>
        <taxon>Pichiales</taxon>
        <taxon>Pichiaceae</taxon>
        <taxon>Komagataella</taxon>
    </lineage>
</organism>
<keyword id="KW-0002">3D-structure</keyword>
<keyword id="KW-0903">Direct protein sequencing</keyword>
<keyword id="KW-0274">FAD</keyword>
<keyword id="KW-0285">Flavoprotein</keyword>
<keyword id="KW-0485">Methanol utilization</keyword>
<keyword id="KW-0560">Oxidoreductase</keyword>
<keyword id="KW-0576">Peroxisome</keyword>
<keyword id="KW-1185">Reference proteome</keyword>
<protein>
    <recommendedName>
        <fullName>Alcohol oxidase 1</fullName>
        <shortName>AO 1</shortName>
        <shortName>AOX 1</shortName>
        <ecNumber>1.1.3.13</ecNumber>
    </recommendedName>
    <alternativeName>
        <fullName>Methanol oxidase 1</fullName>
        <shortName>MOX 1</shortName>
    </alternativeName>
</protein>
<gene>
    <name type="primary">AOX1</name>
    <name type="ordered locus">PAS_chr4_0821</name>
</gene>
<accession>P04842</accession>
<accession>C4R917</accession>
<evidence type="ECO:0000250" key="1"/>
<evidence type="ECO:0000250" key="2">
    <source>
        <dbReference type="UniProtKB" id="E4QP00"/>
    </source>
</evidence>
<evidence type="ECO:0000269" key="3">
    <source>
    </source>
</evidence>
<evidence type="ECO:0000269" key="4">
    <source>
    </source>
</evidence>
<evidence type="ECO:0000305" key="5"/>
<evidence type="ECO:0007829" key="6">
    <source>
        <dbReference type="PDB" id="5I68"/>
    </source>
</evidence>
<reference key="1">
    <citation type="journal article" date="1985" name="Mol. Cell. Biol.">
        <title>Isolation of alcohol oxidase and two other methanol regulatable genes from the yeast Pichia pastoris.</title>
        <authorList>
            <person name="Ellis S.B."/>
            <person name="Brust P.F."/>
            <person name="Koutz P.J."/>
            <person name="Waters A.F."/>
            <person name="Harpold M.M."/>
            <person name="Gingeras T.R."/>
        </authorList>
    </citation>
    <scope>NUCLEOTIDE SEQUENCE [GENOMIC DNA]</scope>
    <scope>PROTEIN SEQUENCE OF 2-19</scope>
    <scope>INDUCTION BY METHANOL</scope>
</reference>
<reference key="2">
    <citation type="journal article" date="2009" name="Nat. Biotechnol.">
        <title>Genome sequence of the recombinant protein production host Pichia pastoris.</title>
        <authorList>
            <person name="De Schutter K."/>
            <person name="Lin Y.-C."/>
            <person name="Tiels P."/>
            <person name="Van Hecke A."/>
            <person name="Glinka S."/>
            <person name="Weber-Lehmann J."/>
            <person name="Rouze P."/>
            <person name="Van de Peer Y."/>
            <person name="Callewaert N."/>
        </authorList>
    </citation>
    <scope>NUCLEOTIDE SEQUENCE [LARGE SCALE GENOMIC DNA]</scope>
    <source>
        <strain>GS115 / ATCC 20864</strain>
    </source>
</reference>
<reference key="3">
    <citation type="journal article" date="1991" name="Yeast">
        <title>Biosynthesis and assembly of alcohol oxidase, a peroxisomal matrix protein in methylotrophic yeasts: a review.</title>
        <authorList>
            <person name="van der Klei I.J."/>
            <person name="Harder W."/>
            <person name="Veenhuis M."/>
        </authorList>
    </citation>
    <scope>REVIEW</scope>
</reference>
<reference key="4">
    <citation type="journal article" date="1997" name="J. Cell Biol.">
        <title>Peroxisomal targeting, import, and assembly of alcohol oxidase in Pichia pastoris.</title>
        <authorList>
            <person name="Waterham H.R."/>
            <person name="Russell K.A."/>
            <person name="Vries Y."/>
            <person name="Cregg J.M."/>
        </authorList>
    </citation>
    <scope>FUNCTION</scope>
    <scope>SUBCELLULAR LOCATION</scope>
    <scope>SUBUNIT</scope>
    <source>
        <strain>ATCC 76273 / CBS 7435 / CECT 11047 / NRRL Y-11430 / Wegner 21-1</strain>
        <strain>GS115 / ATCC 20864</strain>
    </source>
</reference>
<proteinExistence type="evidence at protein level"/>